<organism>
    <name type="scientific">Homo sapiens</name>
    <name type="common">Human</name>
    <dbReference type="NCBI Taxonomy" id="9606"/>
    <lineage>
        <taxon>Eukaryota</taxon>
        <taxon>Metazoa</taxon>
        <taxon>Chordata</taxon>
        <taxon>Craniata</taxon>
        <taxon>Vertebrata</taxon>
        <taxon>Euteleostomi</taxon>
        <taxon>Mammalia</taxon>
        <taxon>Eutheria</taxon>
        <taxon>Euarchontoglires</taxon>
        <taxon>Primates</taxon>
        <taxon>Haplorrhini</taxon>
        <taxon>Catarrhini</taxon>
        <taxon>Hominidae</taxon>
        <taxon>Homo</taxon>
    </lineage>
</organism>
<proteinExistence type="evidence at protein level"/>
<evidence type="ECO:0000250" key="1"/>
<evidence type="ECO:0000255" key="2"/>
<evidence type="ECO:0000255" key="3">
    <source>
        <dbReference type="PROSITE-ProRule" id="PRU00625"/>
    </source>
</evidence>
<evidence type="ECO:0000256" key="4">
    <source>
        <dbReference type="SAM" id="MobiDB-lite"/>
    </source>
</evidence>
<evidence type="ECO:0000269" key="5">
    <source>
    </source>
</evidence>
<evidence type="ECO:0000269" key="6">
    <source>
    </source>
</evidence>
<evidence type="ECO:0000269" key="7">
    <source>
    </source>
</evidence>
<evidence type="ECO:0000269" key="8">
    <source>
    </source>
</evidence>
<evidence type="ECO:0000269" key="9">
    <source>
    </source>
</evidence>
<evidence type="ECO:0000269" key="10">
    <source>
    </source>
</evidence>
<evidence type="ECO:0000269" key="11">
    <source>
    </source>
</evidence>
<evidence type="ECO:0000269" key="12">
    <source>
    </source>
</evidence>
<evidence type="ECO:0000303" key="13">
    <source>
    </source>
</evidence>
<evidence type="ECO:0000303" key="14">
    <source>
    </source>
</evidence>
<evidence type="ECO:0000303" key="15">
    <source>
    </source>
</evidence>
<evidence type="ECO:0000305" key="16"/>
<evidence type="ECO:0007744" key="17">
    <source>
    </source>
</evidence>
<evidence type="ECO:0007744" key="18">
    <source>
    </source>
</evidence>
<evidence type="ECO:0007744" key="19">
    <source>
    </source>
</evidence>
<evidence type="ECO:0007744" key="20">
    <source>
    </source>
</evidence>
<evidence type="ECO:0007744" key="21">
    <source>
    </source>
</evidence>
<evidence type="ECO:0007829" key="22">
    <source>
        <dbReference type="PDB" id="1H6O"/>
    </source>
</evidence>
<evidence type="ECO:0007829" key="23">
    <source>
        <dbReference type="PDB" id="1ITY"/>
    </source>
</evidence>
<evidence type="ECO:0007829" key="24">
    <source>
        <dbReference type="PDB" id="1W0T"/>
    </source>
</evidence>
<evidence type="ECO:0007829" key="25">
    <source>
        <dbReference type="PDB" id="3BQO"/>
    </source>
</evidence>
<evidence type="ECO:0007829" key="26">
    <source>
        <dbReference type="PDB" id="3L82"/>
    </source>
</evidence>
<evidence type="ECO:0007829" key="27">
    <source>
        <dbReference type="PDB" id="8F0A"/>
    </source>
</evidence>
<keyword id="KW-0002">3D-structure</keyword>
<keyword id="KW-0007">Acetylation</keyword>
<keyword id="KW-0013">ADP-ribosylation</keyword>
<keyword id="KW-0025">Alternative splicing</keyword>
<keyword id="KW-0131">Cell cycle</keyword>
<keyword id="KW-0132">Cell division</keyword>
<keyword id="KW-0158">Chromosome</keyword>
<keyword id="KW-0963">Cytoplasm</keyword>
<keyword id="KW-0206">Cytoskeleton</keyword>
<keyword id="KW-0903">Direct protein sequencing</keyword>
<keyword id="KW-0238">DNA-binding</keyword>
<keyword id="KW-1017">Isopeptide bond</keyword>
<keyword id="KW-0498">Mitosis</keyword>
<keyword id="KW-0539">Nucleus</keyword>
<keyword id="KW-0597">Phosphoprotein</keyword>
<keyword id="KW-1267">Proteomics identification</keyword>
<keyword id="KW-1185">Reference proteome</keyword>
<keyword id="KW-0779">Telomere</keyword>
<keyword id="KW-0832">Ubl conjugation</keyword>
<sequence length="439" mass="50246">MAEDVSSAAPSPRGCADGRDADPTEEQMAETERNDEEQFECQELLECQVQVGAPEEEEEEEEDAGLVAEAEAVAAGWMLDFLCLSLCRAFRDGRSEDFRRTRNSAEAIIHGLSSLTACQLRTIYICQFLTRIAAGKTLDAQFENDERITPLESALMIWGSIEKEHDKLHEEIQNLIKIQAIAVCMENGNFKEAEEVFERIFGDPNSHMPFKSKLLMIISQKDTFHSFFQHFSYNHMMEKIKSYVNYVLSEKSSTFLMKAAAKVVESKRTRTITSQDKPSGNDVEMETEANLDTRKSVSDKQSAVTESSEGTVSLLRSHKNLFLSKLQHGTQQQDLNKKERRVGTPQSTKKKKESRRATESRIPVSKSQPVTPEKHRARKRQAWLWEEDKNLRSGVRKYGEGNWSKILLHYKFNNRTSVMLKDRWRTMKKLKLISSDSED</sequence>
<dbReference type="EMBL" id="U40705">
    <property type="protein sequence ID" value="AAB54036.1"/>
    <property type="molecule type" value="mRNA"/>
</dbReference>
<dbReference type="EMBL" id="AF003001">
    <property type="protein sequence ID" value="AAB81137.1"/>
    <property type="molecule type" value="mRNA"/>
</dbReference>
<dbReference type="EMBL" id="AH003684">
    <property type="protein sequence ID" value="AAB17975.1"/>
    <property type="molecule type" value="Genomic_DNA"/>
</dbReference>
<dbReference type="EMBL" id="U74382">
    <property type="protein sequence ID" value="AAB53363.1"/>
    <property type="molecule type" value="mRNA"/>
</dbReference>
<dbReference type="EMBL" id="EU088287">
    <property type="protein sequence ID" value="ABV02580.1"/>
    <property type="molecule type" value="Genomic_DNA"/>
</dbReference>
<dbReference type="EMBL" id="AC022893">
    <property type="status" value="NOT_ANNOTATED_CDS"/>
    <property type="molecule type" value="Genomic_DNA"/>
</dbReference>
<dbReference type="EMBL" id="BC029378">
    <property type="protein sequence ID" value="AAH29378.1"/>
    <property type="molecule type" value="mRNA"/>
</dbReference>
<dbReference type="EMBL" id="X93511">
    <property type="protein sequence ID" value="CAA63768.1"/>
    <property type="molecule type" value="mRNA"/>
</dbReference>
<dbReference type="CCDS" id="CCDS6210.1">
    <molecule id="P54274-2"/>
</dbReference>
<dbReference type="CCDS" id="CCDS6211.1">
    <molecule id="P54274-1"/>
</dbReference>
<dbReference type="PIR" id="A57573">
    <property type="entry name" value="A57573"/>
</dbReference>
<dbReference type="RefSeq" id="NP_003209.2">
    <molecule id="P54274-2"/>
    <property type="nucleotide sequence ID" value="NM_003218.4"/>
</dbReference>
<dbReference type="RefSeq" id="NP_059523.2">
    <molecule id="P54274-1"/>
    <property type="nucleotide sequence ID" value="NM_017489.3"/>
</dbReference>
<dbReference type="PDB" id="1BA5">
    <property type="method" value="NMR"/>
    <property type="chains" value="A=378-430"/>
</dbReference>
<dbReference type="PDB" id="1H6O">
    <property type="method" value="X-ray"/>
    <property type="resolution" value="2.90 A"/>
    <property type="chains" value="A=62-265"/>
</dbReference>
<dbReference type="PDB" id="1ITY">
    <property type="method" value="NMR"/>
    <property type="chains" value="A=371-439"/>
</dbReference>
<dbReference type="PDB" id="1IV6">
    <property type="method" value="NMR"/>
    <property type="chains" value="A=371-439"/>
</dbReference>
<dbReference type="PDB" id="1W0T">
    <property type="method" value="X-ray"/>
    <property type="resolution" value="2.00 A"/>
    <property type="chains" value="A/B=379-431"/>
</dbReference>
<dbReference type="PDB" id="3BQO">
    <property type="method" value="X-ray"/>
    <property type="resolution" value="2.00 A"/>
    <property type="chains" value="A=58-268"/>
</dbReference>
<dbReference type="PDB" id="3L82">
    <property type="method" value="X-ray"/>
    <property type="resolution" value="2.40 A"/>
    <property type="chains" value="A=58-268"/>
</dbReference>
<dbReference type="PDB" id="5HKP">
    <property type="method" value="X-ray"/>
    <property type="resolution" value="2.20 A"/>
    <property type="chains" value="C/D=1-55"/>
</dbReference>
<dbReference type="PDB" id="5WIR">
    <property type="method" value="X-ray"/>
    <property type="resolution" value="2.10 A"/>
    <property type="chains" value="A/B=62-265"/>
</dbReference>
<dbReference type="PDB" id="5XUP">
    <property type="method" value="X-ray"/>
    <property type="resolution" value="2.10 A"/>
    <property type="chains" value="A/B=65-266"/>
</dbReference>
<dbReference type="PDB" id="8F0A">
    <property type="method" value="EM"/>
    <property type="resolution" value="2.60 A"/>
    <property type="chains" value="a/b/c=404-430"/>
</dbReference>
<dbReference type="PDB" id="8F0U">
    <property type="method" value="EM"/>
    <property type="resolution" value="3.10 A"/>
    <property type="chains" value="a=404-430"/>
</dbReference>
<dbReference type="PDB" id="8F1T">
    <property type="method" value="EM"/>
    <property type="resolution" value="12.10 A"/>
    <property type="chains" value="a/b/c=404-430"/>
</dbReference>
<dbReference type="PDB" id="8F1U">
    <property type="method" value="EM"/>
    <property type="resolution" value="13.80 A"/>
    <property type="chains" value="a/b/c=404-430"/>
</dbReference>
<dbReference type="PDB" id="8F21">
    <property type="method" value="EM"/>
    <property type="resolution" value="14.10 A"/>
    <property type="chains" value="a/b/c=404-430"/>
</dbReference>
<dbReference type="PDB" id="8F26">
    <property type="method" value="EM"/>
    <property type="resolution" value="9.70 A"/>
    <property type="chains" value="a=404-430"/>
</dbReference>
<dbReference type="PDB" id="8OX1">
    <property type="method" value="EM"/>
    <property type="resolution" value="2.70 A"/>
    <property type="chains" value="L/M=1-439"/>
</dbReference>
<dbReference type="PDB" id="8W8G">
    <property type="method" value="X-ray"/>
    <property type="resolution" value="2.70 A"/>
    <property type="chains" value="A/B/C/D=58-269"/>
</dbReference>
<dbReference type="PDBsum" id="1BA5"/>
<dbReference type="PDBsum" id="1H6O"/>
<dbReference type="PDBsum" id="1ITY"/>
<dbReference type="PDBsum" id="1IV6"/>
<dbReference type="PDBsum" id="1W0T"/>
<dbReference type="PDBsum" id="3BQO"/>
<dbReference type="PDBsum" id="3L82"/>
<dbReference type="PDBsum" id="5HKP"/>
<dbReference type="PDBsum" id="5WIR"/>
<dbReference type="PDBsum" id="5XUP"/>
<dbReference type="PDBsum" id="8F0A"/>
<dbReference type="PDBsum" id="8F0U"/>
<dbReference type="PDBsum" id="8F1T"/>
<dbReference type="PDBsum" id="8F1U"/>
<dbReference type="PDBsum" id="8F21"/>
<dbReference type="PDBsum" id="8F26"/>
<dbReference type="PDBsum" id="8OX1"/>
<dbReference type="PDBsum" id="8W8G"/>
<dbReference type="BMRB" id="P54274"/>
<dbReference type="EMDB" id="EMD-17252"/>
<dbReference type="EMDB" id="EMD-17253"/>
<dbReference type="EMDB" id="EMD-28754"/>
<dbReference type="EMDB" id="EMD-28781"/>
<dbReference type="EMDB" id="EMD-28800"/>
<dbReference type="EMDB" id="EMD-28801"/>
<dbReference type="EMDB" id="EMD-28806"/>
<dbReference type="EMDB" id="EMD-28808"/>
<dbReference type="SMR" id="P54274"/>
<dbReference type="BioGRID" id="112872">
    <property type="interactions" value="349"/>
</dbReference>
<dbReference type="ComplexPortal" id="CPX-152">
    <property type="entry name" value="Shelterin complex"/>
</dbReference>
<dbReference type="CORUM" id="P54274"/>
<dbReference type="DIP" id="DIP-29412N"/>
<dbReference type="ELM" id="P54274"/>
<dbReference type="FunCoup" id="P54274">
    <property type="interactions" value="3416"/>
</dbReference>
<dbReference type="IntAct" id="P54274">
    <property type="interactions" value="248"/>
</dbReference>
<dbReference type="MINT" id="P54274"/>
<dbReference type="STRING" id="9606.ENSP00000276603"/>
<dbReference type="GlyGen" id="P54274">
    <property type="glycosylation" value="1 site, 1 O-linked glycan (1 site)"/>
</dbReference>
<dbReference type="iPTMnet" id="P54274"/>
<dbReference type="PhosphoSitePlus" id="P54274"/>
<dbReference type="BioMuta" id="TERF1"/>
<dbReference type="DMDM" id="206729904"/>
<dbReference type="jPOST" id="P54274"/>
<dbReference type="MassIVE" id="P54274"/>
<dbReference type="PaxDb" id="9606-ENSP00000276603"/>
<dbReference type="PeptideAtlas" id="P54274"/>
<dbReference type="ProteomicsDB" id="56664">
    <molecule id="P54274-1"/>
</dbReference>
<dbReference type="ProteomicsDB" id="56665">
    <molecule id="P54274-2"/>
</dbReference>
<dbReference type="Pumba" id="P54274"/>
<dbReference type="Antibodypedia" id="12281">
    <property type="antibodies" value="687 antibodies from 39 providers"/>
</dbReference>
<dbReference type="DNASU" id="7013"/>
<dbReference type="Ensembl" id="ENST00000276602.10">
    <molecule id="P54274-2"/>
    <property type="protein sequence ID" value="ENSP00000276602.6"/>
    <property type="gene ID" value="ENSG00000147601.15"/>
</dbReference>
<dbReference type="Ensembl" id="ENST00000276603.10">
    <molecule id="P54274-1"/>
    <property type="protein sequence ID" value="ENSP00000276603.5"/>
    <property type="gene ID" value="ENSG00000147601.15"/>
</dbReference>
<dbReference type="GeneID" id="7013"/>
<dbReference type="KEGG" id="hsa:7013"/>
<dbReference type="MANE-Select" id="ENST00000276603.10">
    <property type="protein sequence ID" value="ENSP00000276603.5"/>
    <property type="RefSeq nucleotide sequence ID" value="NM_017489.3"/>
    <property type="RefSeq protein sequence ID" value="NP_059523.2"/>
</dbReference>
<dbReference type="UCSC" id="uc003xzd.3">
    <molecule id="P54274-1"/>
    <property type="organism name" value="human"/>
</dbReference>
<dbReference type="AGR" id="HGNC:11728"/>
<dbReference type="CTD" id="7013"/>
<dbReference type="DisGeNET" id="7013"/>
<dbReference type="GeneCards" id="TERF1"/>
<dbReference type="HGNC" id="HGNC:11728">
    <property type="gene designation" value="TERF1"/>
</dbReference>
<dbReference type="HPA" id="ENSG00000147601">
    <property type="expression patterns" value="Low tissue specificity"/>
</dbReference>
<dbReference type="MalaCards" id="TERF1"/>
<dbReference type="MIM" id="600951">
    <property type="type" value="gene"/>
</dbReference>
<dbReference type="neXtProt" id="NX_P54274"/>
<dbReference type="OpenTargets" id="ENSG00000147601"/>
<dbReference type="PharmGKB" id="PA36445"/>
<dbReference type="VEuPathDB" id="HostDB:ENSG00000147601"/>
<dbReference type="eggNOG" id="ENOG502RYK3">
    <property type="taxonomic scope" value="Eukaryota"/>
</dbReference>
<dbReference type="GeneTree" id="ENSGT00940000155268"/>
<dbReference type="HOGENOM" id="CLU_034265_0_0_1"/>
<dbReference type="InParanoid" id="P54274"/>
<dbReference type="OMA" id="HMENRYF"/>
<dbReference type="OrthoDB" id="608866at2759"/>
<dbReference type="PAN-GO" id="P54274">
    <property type="GO annotations" value="11 GO annotations based on evolutionary models"/>
</dbReference>
<dbReference type="PhylomeDB" id="P54274"/>
<dbReference type="TreeFam" id="TF333209"/>
<dbReference type="PathwayCommons" id="P54274"/>
<dbReference type="Reactome" id="R-HSA-110328">
    <property type="pathway name" value="Recognition and association of DNA glycosylase with site containing an affected pyrimidine"/>
</dbReference>
<dbReference type="Reactome" id="R-HSA-110329">
    <property type="pathway name" value="Cleavage of the damaged pyrimidine"/>
</dbReference>
<dbReference type="Reactome" id="R-HSA-110330">
    <property type="pathway name" value="Recognition and association of DNA glycosylase with site containing an affected purine"/>
</dbReference>
<dbReference type="Reactome" id="R-HSA-110331">
    <property type="pathway name" value="Cleavage of the damaged purine"/>
</dbReference>
<dbReference type="Reactome" id="R-HSA-1221632">
    <property type="pathway name" value="Meiotic synapsis"/>
</dbReference>
<dbReference type="Reactome" id="R-HSA-171306">
    <property type="pathway name" value="Packaging Of Telomere Ends"/>
</dbReference>
<dbReference type="Reactome" id="R-HSA-171319">
    <property type="pathway name" value="Telomere Extension By Telomerase"/>
</dbReference>
<dbReference type="Reactome" id="R-HSA-174411">
    <property type="pathway name" value="Polymerase switching on the C-strand of the telomere"/>
</dbReference>
<dbReference type="Reactome" id="R-HSA-174414">
    <property type="pathway name" value="Processive synthesis on the C-strand of the telomere"/>
</dbReference>
<dbReference type="Reactome" id="R-HSA-174417">
    <property type="pathway name" value="Telomere C-strand (Lagging Strand) Synthesis"/>
</dbReference>
<dbReference type="Reactome" id="R-HSA-174430">
    <property type="pathway name" value="Telomere C-strand synthesis initiation"/>
</dbReference>
<dbReference type="Reactome" id="R-HSA-174437">
    <property type="pathway name" value="Removal of the Flap Intermediate from the C-strand"/>
</dbReference>
<dbReference type="Reactome" id="R-HSA-2559586">
    <property type="pathway name" value="DNA Damage/Telomere Stress Induced Senescence"/>
</dbReference>
<dbReference type="Reactome" id="R-HSA-9670095">
    <property type="pathway name" value="Inhibition of DNA recombination at telomere"/>
</dbReference>
<dbReference type="SignaLink" id="P54274"/>
<dbReference type="SIGNOR" id="P54274"/>
<dbReference type="BioGRID-ORCS" id="7013">
    <property type="hits" value="605 hits in 1177 CRISPR screens"/>
</dbReference>
<dbReference type="CD-CODE" id="B5B9A610">
    <property type="entry name" value="PML body"/>
</dbReference>
<dbReference type="ChiTaRS" id="TERF1">
    <property type="organism name" value="human"/>
</dbReference>
<dbReference type="EvolutionaryTrace" id="P54274"/>
<dbReference type="GeneWiki" id="TERF1"/>
<dbReference type="GenomeRNAi" id="7013"/>
<dbReference type="Pharos" id="P54274">
    <property type="development level" value="Tbio"/>
</dbReference>
<dbReference type="PRO" id="PR:P54274"/>
<dbReference type="Proteomes" id="UP000005640">
    <property type="component" value="Chromosome 8"/>
</dbReference>
<dbReference type="RNAct" id="P54274">
    <property type="molecule type" value="protein"/>
</dbReference>
<dbReference type="Bgee" id="ENSG00000147601">
    <property type="expression patterns" value="Expressed in buccal mucosa cell and 217 other cell types or tissues"/>
</dbReference>
<dbReference type="ExpressionAtlas" id="P54274">
    <property type="expression patterns" value="baseline and differential"/>
</dbReference>
<dbReference type="GO" id="GO:0000781">
    <property type="term" value="C:chromosome, telomeric region"/>
    <property type="evidence" value="ECO:0000314"/>
    <property type="project" value="BHF-UCL"/>
</dbReference>
<dbReference type="GO" id="GO:0005737">
    <property type="term" value="C:cytoplasm"/>
    <property type="evidence" value="ECO:0007669"/>
    <property type="project" value="UniProtKB-KW"/>
</dbReference>
<dbReference type="GO" id="GO:0001650">
    <property type="term" value="C:fibrillar center"/>
    <property type="evidence" value="ECO:0000314"/>
    <property type="project" value="HPA"/>
</dbReference>
<dbReference type="GO" id="GO:0016604">
    <property type="term" value="C:nuclear body"/>
    <property type="evidence" value="ECO:0000314"/>
    <property type="project" value="HPA"/>
</dbReference>
<dbReference type="GO" id="GO:0000783">
    <property type="term" value="C:nuclear telomere cap complex"/>
    <property type="evidence" value="ECO:0000314"/>
    <property type="project" value="BHF-UCL"/>
</dbReference>
<dbReference type="GO" id="GO:0005730">
    <property type="term" value="C:nucleolus"/>
    <property type="evidence" value="ECO:0000314"/>
    <property type="project" value="BHF-UCL"/>
</dbReference>
<dbReference type="GO" id="GO:0005654">
    <property type="term" value="C:nucleoplasm"/>
    <property type="evidence" value="ECO:0000304"/>
    <property type="project" value="Reactome"/>
</dbReference>
<dbReference type="GO" id="GO:0005634">
    <property type="term" value="C:nucleus"/>
    <property type="evidence" value="ECO:0000314"/>
    <property type="project" value="UniProtKB"/>
</dbReference>
<dbReference type="GO" id="GO:0070187">
    <property type="term" value="C:shelterin complex"/>
    <property type="evidence" value="ECO:0000314"/>
    <property type="project" value="BHF-UCL"/>
</dbReference>
<dbReference type="GO" id="GO:0005819">
    <property type="term" value="C:spindle"/>
    <property type="evidence" value="ECO:0007669"/>
    <property type="project" value="UniProtKB-SubCell"/>
</dbReference>
<dbReference type="GO" id="GO:0071532">
    <property type="term" value="F:ankyrin repeat binding"/>
    <property type="evidence" value="ECO:0000353"/>
    <property type="project" value="BHF-UCL"/>
</dbReference>
<dbReference type="GO" id="GO:0003677">
    <property type="term" value="F:DNA binding"/>
    <property type="evidence" value="ECO:0000303"/>
    <property type="project" value="UniProtKB"/>
</dbReference>
<dbReference type="GO" id="GO:0008301">
    <property type="term" value="F:DNA binding, bending"/>
    <property type="evidence" value="ECO:0000314"/>
    <property type="project" value="BHF-UCL"/>
</dbReference>
<dbReference type="GO" id="GO:0003691">
    <property type="term" value="F:double-stranded telomeric DNA binding"/>
    <property type="evidence" value="ECO:0000314"/>
    <property type="project" value="UniProtKB"/>
</dbReference>
<dbReference type="GO" id="GO:0098505">
    <property type="term" value="F:G-rich strand telomeric DNA binding"/>
    <property type="evidence" value="ECO:0000314"/>
    <property type="project" value="BHF-UCL"/>
</dbReference>
<dbReference type="GO" id="GO:0042802">
    <property type="term" value="F:identical protein binding"/>
    <property type="evidence" value="ECO:0000353"/>
    <property type="project" value="BHF-UCL"/>
</dbReference>
<dbReference type="GO" id="GO:0008017">
    <property type="term" value="F:microtubule binding"/>
    <property type="evidence" value="ECO:0000314"/>
    <property type="project" value="UniProtKB"/>
</dbReference>
<dbReference type="GO" id="GO:0042803">
    <property type="term" value="F:protein homodimerization activity"/>
    <property type="evidence" value="ECO:0000353"/>
    <property type="project" value="UniProtKB"/>
</dbReference>
<dbReference type="GO" id="GO:0042162">
    <property type="term" value="F:telomeric DNA binding"/>
    <property type="evidence" value="ECO:0000314"/>
    <property type="project" value="BHF-UCL"/>
</dbReference>
<dbReference type="GO" id="GO:0051301">
    <property type="term" value="P:cell division"/>
    <property type="evidence" value="ECO:0007669"/>
    <property type="project" value="UniProtKB-KW"/>
</dbReference>
<dbReference type="GO" id="GO:0045141">
    <property type="term" value="P:meiotic telomere clustering"/>
    <property type="evidence" value="ECO:0007669"/>
    <property type="project" value="Ensembl"/>
</dbReference>
<dbReference type="GO" id="GO:0008156">
    <property type="term" value="P:negative regulation of DNA replication"/>
    <property type="evidence" value="ECO:0000314"/>
    <property type="project" value="BHF-UCL"/>
</dbReference>
<dbReference type="GO" id="GO:1904850">
    <property type="term" value="P:negative regulation of establishment of protein localization to telomere"/>
    <property type="evidence" value="ECO:0000315"/>
    <property type="project" value="BHF-UCL"/>
</dbReference>
<dbReference type="GO" id="GO:1904914">
    <property type="term" value="P:negative regulation of establishment of protein-containing complex localization to telomere"/>
    <property type="evidence" value="ECO:0000305"/>
    <property type="project" value="BHF-UCL"/>
</dbReference>
<dbReference type="GO" id="GO:1904911">
    <property type="term" value="P:negative regulation of establishment of RNA localization to telomere"/>
    <property type="evidence" value="ECO:0000315"/>
    <property type="project" value="BHF-UCL"/>
</dbReference>
<dbReference type="GO" id="GO:0032214">
    <property type="term" value="P:negative regulation of telomere maintenance via semi-conservative replication"/>
    <property type="evidence" value="ECO:0000303"/>
    <property type="project" value="BHF-UCL"/>
</dbReference>
<dbReference type="GO" id="GO:0032211">
    <property type="term" value="P:negative regulation of telomere maintenance via telomerase"/>
    <property type="evidence" value="ECO:0000316"/>
    <property type="project" value="BHF-UCL"/>
</dbReference>
<dbReference type="GO" id="GO:1904357">
    <property type="term" value="P:negative regulation of telomere maintenance via telomere lengthening"/>
    <property type="evidence" value="ECO:0000304"/>
    <property type="project" value="BHF-UCL"/>
</dbReference>
<dbReference type="GO" id="GO:1905839">
    <property type="term" value="P:negative regulation of telomeric D-loop disassembly"/>
    <property type="evidence" value="ECO:0000314"/>
    <property type="project" value="BHF-UCL"/>
</dbReference>
<dbReference type="GO" id="GO:1904792">
    <property type="term" value="P:positive regulation of shelterin complex assembly"/>
    <property type="evidence" value="ECO:0000315"/>
    <property type="project" value="BHF-UCL"/>
</dbReference>
<dbReference type="GO" id="GO:0032206">
    <property type="term" value="P:positive regulation of telomere maintenance"/>
    <property type="evidence" value="ECO:0000303"/>
    <property type="project" value="ComplexPortal"/>
</dbReference>
<dbReference type="GO" id="GO:0009410">
    <property type="term" value="P:response to xenobiotic stimulus"/>
    <property type="evidence" value="ECO:0007669"/>
    <property type="project" value="Ensembl"/>
</dbReference>
<dbReference type="GO" id="GO:0090656">
    <property type="term" value="P:t-circle formation"/>
    <property type="evidence" value="ECO:0000304"/>
    <property type="project" value="BHF-UCL"/>
</dbReference>
<dbReference type="GO" id="GO:0016233">
    <property type="term" value="P:telomere capping"/>
    <property type="evidence" value="ECO:0000314"/>
    <property type="project" value="ComplexPortal"/>
</dbReference>
<dbReference type="GO" id="GO:0000723">
    <property type="term" value="P:telomere maintenance"/>
    <property type="evidence" value="ECO:0000315"/>
    <property type="project" value="BHF-UCL"/>
</dbReference>
<dbReference type="GO" id="GO:0007004">
    <property type="term" value="P:telomere maintenance via telomerase"/>
    <property type="evidence" value="ECO:0000314"/>
    <property type="project" value="BHF-UCL"/>
</dbReference>
<dbReference type="GO" id="GO:0061820">
    <property type="term" value="P:telomeric D-loop disassembly"/>
    <property type="evidence" value="ECO:0000316"/>
    <property type="project" value="BHF-UCL"/>
</dbReference>
<dbReference type="CDD" id="cd11660">
    <property type="entry name" value="SANT_TRF"/>
    <property type="match status" value="1"/>
</dbReference>
<dbReference type="CDD" id="cd00280">
    <property type="entry name" value="TRFH"/>
    <property type="match status" value="1"/>
</dbReference>
<dbReference type="FunFam" id="1.25.40.210:FF:000001">
    <property type="entry name" value="Telomeric repeat-binding factor"/>
    <property type="match status" value="1"/>
</dbReference>
<dbReference type="FunFam" id="1.10.10.60:FF:000129">
    <property type="entry name" value="Telomeric repeat-binding factor 2"/>
    <property type="match status" value="1"/>
</dbReference>
<dbReference type="Gene3D" id="1.10.10.60">
    <property type="entry name" value="Homeodomain-like"/>
    <property type="match status" value="1"/>
</dbReference>
<dbReference type="Gene3D" id="1.25.40.210">
    <property type="entry name" value="Telomere repeat-binding factor, dimerisation domain"/>
    <property type="match status" value="1"/>
</dbReference>
<dbReference type="IDEAL" id="IID00155"/>
<dbReference type="InterPro" id="IPR009057">
    <property type="entry name" value="Homeodomain-like_sf"/>
</dbReference>
<dbReference type="InterPro" id="IPR017930">
    <property type="entry name" value="Myb_dom"/>
</dbReference>
<dbReference type="InterPro" id="IPR001005">
    <property type="entry name" value="SANT/Myb"/>
</dbReference>
<dbReference type="InterPro" id="IPR013867">
    <property type="entry name" value="Telomere_rpt-bd_fac_dimer_dom"/>
</dbReference>
<dbReference type="InterPro" id="IPR036507">
    <property type="entry name" value="Telomere_rpt-bd_fac_dimer_sf"/>
</dbReference>
<dbReference type="InterPro" id="IPR017357">
    <property type="entry name" value="TERF1/2"/>
</dbReference>
<dbReference type="InterPro" id="IPR052450">
    <property type="entry name" value="TRBD-Containing_Protein"/>
</dbReference>
<dbReference type="PANTHER" id="PTHR46734:SF3">
    <property type="entry name" value="TELOMERIC REPEAT-BINDING FACTOR 1"/>
    <property type="match status" value="1"/>
</dbReference>
<dbReference type="PANTHER" id="PTHR46734">
    <property type="entry name" value="TELOMERIC REPEAT-BINDING FACTOR 1 TERF1"/>
    <property type="match status" value="1"/>
</dbReference>
<dbReference type="Pfam" id="PF00249">
    <property type="entry name" value="Myb_DNA-binding"/>
    <property type="match status" value="1"/>
</dbReference>
<dbReference type="Pfam" id="PF08558">
    <property type="entry name" value="TRF"/>
    <property type="match status" value="1"/>
</dbReference>
<dbReference type="PIRSF" id="PIRSF038016">
    <property type="entry name" value="Telomere_bd-1_Pin2"/>
    <property type="match status" value="1"/>
</dbReference>
<dbReference type="SMART" id="SM00717">
    <property type="entry name" value="SANT"/>
    <property type="match status" value="1"/>
</dbReference>
<dbReference type="SUPFAM" id="SSF46689">
    <property type="entry name" value="Homeodomain-like"/>
    <property type="match status" value="1"/>
</dbReference>
<dbReference type="SUPFAM" id="SSF63600">
    <property type="entry name" value="Telomeric repeat binding factor (TRF) dimerisation domain"/>
    <property type="match status" value="1"/>
</dbReference>
<dbReference type="PROSITE" id="PS51294">
    <property type="entry name" value="HTH_MYB"/>
    <property type="match status" value="1"/>
</dbReference>
<protein>
    <recommendedName>
        <fullName>Telomeric repeat-binding factor 1</fullName>
    </recommendedName>
    <alternativeName>
        <fullName>NIMA-interacting protein 2</fullName>
    </alternativeName>
    <alternativeName>
        <fullName>TTAGGG repeat-binding factor 1</fullName>
    </alternativeName>
    <alternativeName>
        <fullName>Telomeric protein Pin2/TRF1</fullName>
    </alternativeName>
</protein>
<name>TERF1_HUMAN</name>
<gene>
    <name type="primary">TERF1</name>
    <name type="synonym">PIN2</name>
    <name type="synonym">TRBF1</name>
    <name type="synonym">TRF</name>
    <name type="synonym">TRF1</name>
</gene>
<comment type="function">
    <text evidence="8">Binds the telomeric double-stranded 5'-TTAGGG-3' repeat and negatively regulates telomere length. Involved in the regulation of the mitotic spindle. Component of the shelterin complex (telosome) that is involved in the regulation of telomere length and protection. Shelterin associates with arrays of double-stranded 5'-TTAGGG-3' repeats added by telomerase and protects chromosome ends; without its protective activity, telomeres are no longer hidden from the DNA damage surveillance and chromosome ends are inappropriately processed by DNA repair pathways.</text>
</comment>
<comment type="subunit">
    <text evidence="1 12">Homodimer; can contain both isoforms. Found in a complex with POT1; TINF2 and TNKS1. Interacts with ATM, TINF2, TNKS1, TNKS2, PINX1, NEK2 and MAPRE1. Component of the shelterin complex (telosome) composed of TERF1, TERF2, TINF2, TERF2IP ACD and POT1. Interacts with RLIM (via N-terminus). Interacts with FBXO4. Interaction with TINF2 protects against interaction with FBXO4 and subsequent polyubiquitination and proteasomal degradation. Interacts with GNL3L; this interaction promotes homodimerization. Interacts with TIN2. Interacts with RTEL1. Interactions with GNL3L and TIN2 are mutually exclusive. Interacts with CCDC79/TERB1 (By similarity). Interacts with TRIOBP isoform 1; mediates TERF1 localization to the centrosome (PubMed:24692559).</text>
</comment>
<comment type="interaction">
    <interactant intactId="EBI-710997">
        <id>P54274</id>
    </interactant>
    <interactant intactId="EBI-1047273">
        <id>Q9BWD1</id>
        <label>ACAT2</label>
    </interactant>
    <organismsDiffer>false</organismsDiffer>
    <experiments>2</experiments>
</comment>
<comment type="interaction">
    <interactant intactId="EBI-710997">
        <id>P54274</id>
    </interactant>
    <interactant intactId="EBI-742064">
        <id>Q03154</id>
        <label>ACY1</label>
    </interactant>
    <organismsDiffer>false</organismsDiffer>
    <experiments>2</experiments>
</comment>
<comment type="interaction">
    <interactant intactId="EBI-710997">
        <id>P54274</id>
    </interactant>
    <interactant intactId="EBI-8796759">
        <id>Q01433</id>
        <label>AMPD2</label>
    </interactant>
    <organismsDiffer>false</organismsDiffer>
    <experiments>2</experiments>
</comment>
<comment type="interaction">
    <interactant intactId="EBI-710997">
        <id>P54274</id>
    </interactant>
    <interactant intactId="EBI-7121510">
        <id>P49418</id>
        <label>AMPH</label>
    </interactant>
    <organismsDiffer>false</organismsDiffer>
    <experiments>2</experiments>
</comment>
<comment type="interaction">
    <interactant intactId="EBI-710997">
        <id>P54274</id>
    </interactant>
    <interactant intactId="EBI-495465">
        <id>Q13315</id>
        <label>ATM</label>
    </interactant>
    <organismsDiffer>false</organismsDiffer>
    <experiments>3</experiments>
</comment>
<comment type="interaction">
    <interactant intactId="EBI-710997">
        <id>P54274</id>
    </interactant>
    <interactant intactId="EBI-621372">
        <id>P54132</id>
        <label>BLM</label>
    </interactant>
    <organismsDiffer>false</organismsDiffer>
    <experiments>3</experiments>
</comment>
<comment type="interaction">
    <interactant intactId="EBI-710997">
        <id>P54274</id>
    </interactant>
    <interactant intactId="EBI-2808308">
        <id>Q6P2H3</id>
        <label>CEP85</label>
    </interactant>
    <organismsDiffer>false</organismsDiffer>
    <experiments>2</experiments>
</comment>
<comment type="interaction">
    <interactant intactId="EBI-710997">
        <id>P54274</id>
    </interactant>
    <interactant intactId="EBI-351152">
        <id>Q9BR76</id>
        <label>CORO1B</label>
    </interactant>
    <organismsDiffer>false</organismsDiffer>
    <experiments>2</experiments>
</comment>
<comment type="interaction">
    <interactant intactId="EBI-710997">
        <id>P54274</id>
    </interactant>
    <interactant intactId="EBI-7519424">
        <id>P53674</id>
        <label>CRYBB1</label>
    </interactant>
    <organismsDiffer>false</organismsDiffer>
    <experiments>2</experiments>
</comment>
<comment type="interaction">
    <interactant intactId="EBI-710997">
        <id>P54274</id>
    </interactant>
    <interactant intactId="EBI-7107048">
        <id>Q14894</id>
        <label>CRYM</label>
    </interactant>
    <organismsDiffer>false</organismsDiffer>
    <experiments>2</experiments>
</comment>
<comment type="interaction">
    <interactant intactId="EBI-710997">
        <id>P54274</id>
    </interactant>
    <interactant intactId="EBI-11305571">
        <id>Q96C57</id>
        <label>CUSTOS</label>
    </interactant>
    <organismsDiffer>false</organismsDiffer>
    <experiments>2</experiments>
</comment>
<comment type="interaction">
    <interactant intactId="EBI-710997">
        <id>P54274</id>
    </interactant>
    <interactant intactId="EBI-719232">
        <id>Q9UMR2</id>
        <label>DDX19B</label>
    </interactant>
    <organismsDiffer>false</organismsDiffer>
    <experiments>2</experiments>
</comment>
<comment type="interaction">
    <interactant intactId="EBI-710997">
        <id>P54274</id>
    </interactant>
    <interactant intactId="EBI-540096">
        <id>Q9BUQ8</id>
        <label>DDX23</label>
    </interactant>
    <organismsDiffer>false</organismsDiffer>
    <experiments>2</experiments>
</comment>
<comment type="interaction">
    <interactant intactId="EBI-710997">
        <id>P54274</id>
    </interactant>
    <interactant intactId="EBI-348253">
        <id>O00148</id>
        <label>DDX39A</label>
    </interactant>
    <organismsDiffer>false</organismsDiffer>
    <experiments>2</experiments>
</comment>
<comment type="interaction">
    <interactant intactId="EBI-710997">
        <id>P54274</id>
    </interactant>
    <interactant intactId="EBI-357034">
        <id>P25685</id>
        <label>DNAJB1</label>
    </interactant>
    <organismsDiffer>false</organismsDiffer>
    <experiments>2</experiments>
</comment>
<comment type="interaction">
    <interactant intactId="EBI-710997">
        <id>P54274</id>
    </interactant>
    <interactant intactId="EBI-748674">
        <id>O43598</id>
        <label>DNPH1</label>
    </interactant>
    <organismsDiffer>false</organismsDiffer>
    <experiments>2</experiments>
</comment>
<comment type="interaction">
    <interactant intactId="EBI-710997">
        <id>P54274</id>
    </interactant>
    <interactant intactId="EBI-465536">
        <id>Q9H4G0</id>
        <label>EPB41L1</label>
    </interactant>
    <organismsDiffer>false</organismsDiffer>
    <experiments>2</experiments>
</comment>
<comment type="interaction">
    <interactant intactId="EBI-710997">
        <id>P54274</id>
    </interactant>
    <interactant intactId="EBI-960421">
        <id>Q9UKT5-1</id>
        <label>FBXO4</label>
    </interactant>
    <organismsDiffer>false</organismsDiffer>
    <experiments>2</experiments>
</comment>
<comment type="interaction">
    <interactant intactId="EBI-710997">
        <id>P54274</id>
    </interactant>
    <interactant intactId="EBI-1055635">
        <id>P07332</id>
        <label>FES</label>
    </interactant>
    <organismsDiffer>false</organismsDiffer>
    <experiments>2</experiments>
</comment>
<comment type="interaction">
    <interactant intactId="EBI-710997">
        <id>P54274</id>
    </interactant>
    <interactant intactId="EBI-2969145">
        <id>P48637</id>
        <label>GSS</label>
    </interactant>
    <organismsDiffer>false</organismsDiffer>
    <experiments>2</experiments>
</comment>
<comment type="interaction">
    <interactant intactId="EBI-710997">
        <id>P54274</id>
    </interactant>
    <interactant intactId="EBI-750369">
        <id>P14317</id>
        <label>HCLS1</label>
    </interactant>
    <organismsDiffer>false</organismsDiffer>
    <experiments>2</experiments>
</comment>
<comment type="interaction">
    <interactant intactId="EBI-710997">
        <id>P54274</id>
    </interactant>
    <interactant intactId="EBI-5460660">
        <id>Q96MH2</id>
        <label>HEXIM2</label>
    </interactant>
    <organismsDiffer>false</organismsDiffer>
    <experiments>2</experiments>
</comment>
<comment type="interaction">
    <interactant intactId="EBI-710997">
        <id>P54274</id>
    </interactant>
    <interactant intactId="EBI-3907760">
        <id>Q93099</id>
        <label>HGD</label>
    </interactant>
    <organismsDiffer>false</organismsDiffer>
    <experiments>2</experiments>
</comment>
<comment type="interaction">
    <interactant intactId="EBI-710997">
        <id>P54274</id>
    </interactant>
    <interactant intactId="EBI-355106">
        <id>P17066</id>
        <label>HSPA6</label>
    </interactant>
    <organismsDiffer>false</organismsDiffer>
    <experiments>2</experiments>
</comment>
<comment type="interaction">
    <interactant intactId="EBI-710997">
        <id>P54274</id>
    </interactant>
    <interactant intactId="EBI-751001">
        <id>Q14145</id>
        <label>KEAP1</label>
    </interactant>
    <organismsDiffer>false</organismsDiffer>
    <experiments>2</experiments>
</comment>
<comment type="interaction">
    <interactant intactId="EBI-710997">
        <id>P54274</id>
    </interactant>
    <interactant intactId="EBI-8472352">
        <id>Q8TBB5</id>
        <label>KLHDC4</label>
    </interactant>
    <organismsDiffer>false</organismsDiffer>
    <experiments>2</experiments>
</comment>
<comment type="interaction">
    <interactant intactId="EBI-710997">
        <id>P54274</id>
    </interactant>
    <interactant intactId="EBI-358748">
        <id>P07195</id>
        <label>LDHB</label>
    </interactant>
    <organismsDiffer>false</organismsDiffer>
    <experiments>2</experiments>
</comment>
<comment type="interaction">
    <interactant intactId="EBI-710997">
        <id>P54274</id>
    </interactant>
    <interactant intactId="EBI-720984">
        <id>Q6UWE0</id>
        <label>LRSAM1</label>
    </interactant>
    <organismsDiffer>false</organismsDiffer>
    <experiments>2</experiments>
</comment>
<comment type="interaction">
    <interactant intactId="EBI-710997">
        <id>P54274</id>
    </interactant>
    <interactant intactId="EBI-1004115">
        <id>Q15691</id>
        <label>MAPRE1</label>
    </interactant>
    <organismsDiffer>false</organismsDiffer>
    <experiments>2</experiments>
</comment>
<comment type="interaction">
    <interactant intactId="EBI-710997">
        <id>P54274</id>
    </interactant>
    <interactant intactId="EBI-709625">
        <id>P40925</id>
        <label>MDH1</label>
    </interactant>
    <organismsDiffer>false</organismsDiffer>
    <experiments>2</experiments>
</comment>
<comment type="interaction">
    <interactant intactId="EBI-710997">
        <id>P54274</id>
    </interactant>
    <interactant intactId="EBI-742459">
        <id>Q9BU76</id>
        <label>MMTAG2</label>
    </interactant>
    <organismsDiffer>false</organismsDiffer>
    <experiments>2</experiments>
</comment>
<comment type="interaction">
    <interactant intactId="EBI-710997">
        <id>P54274</id>
    </interactant>
    <interactant intactId="EBI-528768">
        <id>P26038</id>
        <label>MSN</label>
    </interactant>
    <organismsDiffer>false</organismsDiffer>
    <experiments>2</experiments>
</comment>
<comment type="interaction">
    <interactant intactId="EBI-710997">
        <id>P54274</id>
    </interactant>
    <interactant intactId="EBI-356392">
        <id>P55209</id>
        <label>NAP1L1</label>
    </interactant>
    <organismsDiffer>false</organismsDiffer>
    <experiments>2</experiments>
</comment>
<comment type="interaction">
    <interactant intactId="EBI-710997">
        <id>P54274</id>
    </interactant>
    <interactant intactId="EBI-475646">
        <id>P07196</id>
        <label>NEFL</label>
    </interactant>
    <organismsDiffer>false</organismsDiffer>
    <experiments>2</experiments>
</comment>
<comment type="interaction">
    <interactant intactId="EBI-710997">
        <id>P54274</id>
    </interactant>
    <interactant intactId="EBI-716098">
        <id>Q9UGY1</id>
        <label>NOL12</label>
    </interactant>
    <organismsDiffer>false</organismsDiffer>
    <experiments>2</experiments>
</comment>
<comment type="interaction">
    <interactant intactId="EBI-710997">
        <id>P54274</id>
    </interactant>
    <interactant intactId="EBI-3936907">
        <id>Q9Y5A7</id>
        <label>NUB1</label>
    </interactant>
    <organismsDiffer>false</organismsDiffer>
    <experiments>8</experiments>
</comment>
<comment type="interaction">
    <interactant intactId="EBI-710997">
        <id>P54274</id>
    </interactant>
    <interactant intactId="EBI-742503">
        <id>Q9UNF0</id>
        <label>PACSIN2</label>
    </interactant>
    <organismsDiffer>false</organismsDiffer>
    <experiments>2</experiments>
</comment>
<comment type="interaction">
    <interactant intactId="EBI-710997">
        <id>P54274</id>
    </interactant>
    <interactant intactId="EBI-713738">
        <id>O96013</id>
        <label>PAK4</label>
    </interactant>
    <organismsDiffer>false</organismsDiffer>
    <experiments>2</experiments>
</comment>
<comment type="interaction">
    <interactant intactId="EBI-710997">
        <id>P54274</id>
    </interactant>
    <interactant intactId="EBI-948765">
        <id>P12955</id>
        <label>PEPD</label>
    </interactant>
    <organismsDiffer>false</organismsDiffer>
    <experiments>2</experiments>
</comment>
<comment type="interaction">
    <interactant intactId="EBI-710997">
        <id>P54274</id>
    </interactant>
    <interactant intactId="EBI-721782">
        <id>Q96BK5</id>
        <label>PINX1</label>
    </interactant>
    <organismsDiffer>false</organismsDiffer>
    <experiments>4</experiments>
</comment>
<comment type="interaction">
    <interactant intactId="EBI-710997">
        <id>P54274</id>
    </interactant>
    <interactant intactId="EBI-725702">
        <id>O15355</id>
        <label>PPM1G</label>
    </interactant>
    <organismsDiffer>false</organismsDiffer>
    <experiments>2</experiments>
</comment>
<comment type="interaction">
    <interactant intactId="EBI-710997">
        <id>P54274</id>
    </interactant>
    <interactant intactId="EBI-353193">
        <id>Q06830</id>
        <label>PRDX1</label>
    </interactant>
    <organismsDiffer>false</organismsDiffer>
    <experiments>2</experiments>
</comment>
<comment type="interaction">
    <interactant intactId="EBI-710997">
        <id>P54274</id>
    </interactant>
    <interactant intactId="EBI-2255129">
        <id>P30041</id>
        <label>PRDX6</label>
    </interactant>
    <organismsDiffer>false</organismsDiffer>
    <experiments>2</experiments>
</comment>
<comment type="interaction">
    <interactant intactId="EBI-710997">
        <id>P54274</id>
    </interactant>
    <interactant intactId="EBI-1220572">
        <id>P54829</id>
        <label>PTPN5</label>
    </interactant>
    <organismsDiffer>false</organismsDiffer>
    <experiments>2</experiments>
</comment>
<comment type="interaction">
    <interactant intactId="EBI-710997">
        <id>P54274</id>
    </interactant>
    <interactant intactId="EBI-8638511">
        <id>P0DJD3</id>
        <label>RBMY1A1</label>
    </interactant>
    <organismsDiffer>false</organismsDiffer>
    <experiments>2</experiments>
</comment>
<comment type="interaction">
    <interactant intactId="EBI-710997">
        <id>P54274</id>
    </interactant>
    <interactant intactId="EBI-722861">
        <id>O94761</id>
        <label>RECQL4</label>
    </interactant>
    <organismsDiffer>false</organismsDiffer>
    <experiments>2</experiments>
</comment>
<comment type="interaction">
    <interactant intactId="EBI-710997">
        <id>P54274</id>
    </interactant>
    <interactant intactId="EBI-714023">
        <id>Q8N5U6</id>
        <label>RNF10</label>
    </interactant>
    <organismsDiffer>false</organismsDiffer>
    <experiments>2</experiments>
</comment>
<comment type="interaction">
    <interactant intactId="EBI-710997">
        <id>P54274</id>
    </interactant>
    <interactant intactId="EBI-356928">
        <id>Q9H6T3</id>
        <label>RPAP3</label>
    </interactant>
    <organismsDiffer>false</organismsDiffer>
    <experiments>2</experiments>
</comment>
<comment type="interaction">
    <interactant intactId="EBI-710997">
        <id>P54274</id>
    </interactant>
    <interactant intactId="EBI-916524">
        <id>P84098</id>
        <label>RPL19</label>
    </interactant>
    <organismsDiffer>false</organismsDiffer>
    <experiments>2</experiments>
</comment>
<comment type="interaction">
    <interactant intactId="EBI-710997">
        <id>P54274</id>
    </interactant>
    <interactant intactId="EBI-740467">
        <id>O95197</id>
        <label>RTN3</label>
    </interactant>
    <organismsDiffer>false</organismsDiffer>
    <experiments>2</experiments>
</comment>
<comment type="interaction">
    <interactant intactId="EBI-710997">
        <id>P54274</id>
    </interactant>
    <interactant intactId="EBI-346869">
        <id>Q9Y3L3</id>
        <label>SH3BP1</label>
    </interactant>
    <organismsDiffer>false</organismsDiffer>
    <experiments>2</experiments>
</comment>
<comment type="interaction">
    <interactant intactId="EBI-710997">
        <id>P54274</id>
    </interactant>
    <interactant intactId="EBI-10313866">
        <id>Q9NUL5</id>
        <label>SHFL</label>
    </interactant>
    <organismsDiffer>false</organismsDiffer>
    <experiments>2</experiments>
</comment>
<comment type="interaction">
    <interactant intactId="EBI-710997">
        <id>P54274</id>
    </interactant>
    <interactant intactId="EBI-1053810">
        <id>O76070</id>
        <label>SNCG</label>
    </interactant>
    <organismsDiffer>false</organismsDiffer>
    <experiments>2</experiments>
</comment>
<comment type="interaction">
    <interactant intactId="EBI-710997">
        <id>P54274</id>
    </interactant>
    <interactant intactId="EBI-6621955">
        <id>P35610</id>
        <label>SOAT1</label>
    </interactant>
    <organismsDiffer>false</organismsDiffer>
    <experiments>2</experiments>
</comment>
<comment type="interaction">
    <interactant intactId="EBI-710997">
        <id>P54274</id>
    </interactant>
    <interactant intactId="EBI-1056183">
        <id>P19623</id>
        <label>SRM</label>
    </interactant>
    <organismsDiffer>false</organismsDiffer>
    <experiments>2</experiments>
</comment>
<comment type="interaction">
    <interactant intactId="EBI-710997">
        <id>P54274</id>
    </interactant>
    <interactant intactId="EBI-1175097">
        <id>Q8WVM7</id>
        <label>STAG1</label>
    </interactant>
    <organismsDiffer>false</organismsDiffer>
    <experiments>4</experiments>
</comment>
<comment type="interaction">
    <interactant intactId="EBI-710997">
        <id>P54274</id>
    </interactant>
    <interactant intactId="EBI-710464">
        <id>O00267</id>
        <label>SUPT5H</label>
    </interactant>
    <organismsDiffer>false</organismsDiffer>
    <experiments>2</experiments>
</comment>
<comment type="interaction">
    <interactant intactId="EBI-710997">
        <id>P54274</id>
    </interactant>
    <interactant intactId="EBI-78302">
        <id>P43405</id>
        <label>SYK</label>
    </interactant>
    <organismsDiffer>false</organismsDiffer>
    <experiments>2</experiments>
</comment>
<comment type="interaction">
    <interactant intactId="EBI-710997">
        <id>P54274</id>
    </interactant>
    <interactant intactId="EBI-21942840">
        <id>Q8NA31</id>
        <label>TERB1</label>
    </interactant>
    <organismsDiffer>false</organismsDiffer>
    <experiments>4</experiments>
</comment>
<comment type="interaction">
    <interactant intactId="EBI-710997">
        <id>P54274</id>
    </interactant>
    <interactant intactId="EBI-746510">
        <id>Q9NWX6</id>
        <label>THG1L</label>
    </interactant>
    <organismsDiffer>false</organismsDiffer>
    <experiments>2</experiments>
</comment>
<comment type="interaction">
    <interactant intactId="EBI-710997">
        <id>P54274</id>
    </interactant>
    <interactant intactId="EBI-717399">
        <id>Q9BSI4</id>
        <label>TINF2</label>
    </interactant>
    <organismsDiffer>false</organismsDiffer>
    <experiments>12</experiments>
</comment>
<comment type="interaction">
    <interactant intactId="EBI-710997">
        <id>P54274</id>
    </interactant>
    <interactant intactId="EBI-717418">
        <id>Q9BSI4-3</id>
        <label>TINF2</label>
    </interactant>
    <organismsDiffer>false</organismsDiffer>
    <experiments>2</experiments>
</comment>
<comment type="interaction">
    <interactant intactId="EBI-710997">
        <id>P54274</id>
    </interactant>
    <interactant intactId="EBI-1050560">
        <id>P29401</id>
        <label>TKT</label>
    </interactant>
    <organismsDiffer>false</organismsDiffer>
    <experiments>2</experiments>
</comment>
<comment type="interaction">
    <interactant intactId="EBI-710997">
        <id>P54274</id>
    </interactant>
    <interactant intactId="EBI-1105254">
        <id>O95271</id>
        <label>TNKS</label>
    </interactant>
    <organismsDiffer>false</organismsDiffer>
    <experiments>8</experiments>
</comment>
<comment type="interaction">
    <interactant intactId="EBI-710997">
        <id>P54274</id>
    </interactant>
    <interactant intactId="EBI-4398527">
        <id>Q9H2K2</id>
        <label>TNKS2</label>
    </interactant>
    <organismsDiffer>false</organismsDiffer>
    <experiments>5</experiments>
</comment>
<comment type="interaction">
    <interactant intactId="EBI-710997">
        <id>P54274</id>
    </interactant>
    <interactant intactId="EBI-431907">
        <id>O14787</id>
        <label>TNPO2</label>
    </interactant>
    <organismsDiffer>false</organismsDiffer>
    <experiments>2</experiments>
</comment>
<comment type="interaction">
    <interactant intactId="EBI-710997">
        <id>P54274</id>
    </interactant>
    <interactant intactId="EBI-717475">
        <id>P60174</id>
        <label>TPI1</label>
    </interactant>
    <organismsDiffer>false</organismsDiffer>
    <experiments>2</experiments>
</comment>
<comment type="interaction">
    <interactant intactId="EBI-710997">
        <id>P54274</id>
    </interactant>
    <interactant intactId="EBI-748900">
        <id>Q9NXH9</id>
        <label>TRMT1</label>
    </interactant>
    <organismsDiffer>false</organismsDiffer>
    <experiments>2</experiments>
</comment>
<comment type="interaction">
    <interactant intactId="EBI-710997">
        <id>P54274</id>
    </interactant>
    <interactant intactId="EBI-350989">
        <id>Q13509</id>
        <label>TUBB3</label>
    </interactant>
    <organismsDiffer>false</organismsDiffer>
    <experiments>2</experiments>
</comment>
<comment type="interaction">
    <interactant intactId="EBI-710997">
        <id>P54274</id>
    </interactant>
    <interactant intactId="EBI-721244">
        <id>P23381</id>
        <label>WARS1</label>
    </interactant>
    <organismsDiffer>false</organismsDiffer>
    <experiments>2</experiments>
</comment>
<comment type="interaction">
    <interactant intactId="EBI-710997">
        <id>P54274</id>
    </interactant>
    <interactant intactId="EBI-720609">
        <id>O76024</id>
        <label>WFS1</label>
    </interactant>
    <organismsDiffer>false</organismsDiffer>
    <experiments>2</experiments>
</comment>
<comment type="interaction">
    <interactant intactId="EBI-710997">
        <id>P54274</id>
    </interactant>
    <interactant intactId="EBI-25487941">
        <id>PRO_0000037315</id>
        <label>rep</label>
        <dbReference type="UniProtKB" id="P0C6X7"/>
    </interactant>
    <organismsDiffer>true</organismsDiffer>
    <experiments>2</experiments>
</comment>
<comment type="interaction">
    <interactant intactId="EBI-711018">
        <id>P54274-2</id>
    </interactant>
    <interactant intactId="EBI-10312733">
        <id>Q9NR81</id>
        <label>ARHGEF3</label>
    </interactant>
    <organismsDiffer>false</organismsDiffer>
    <experiments>3</experiments>
</comment>
<comment type="interaction">
    <interactant intactId="EBI-711018">
        <id>P54274-2</id>
    </interactant>
    <interactant intactId="EBI-495465">
        <id>Q13315</id>
        <label>ATM</label>
    </interactant>
    <organismsDiffer>false</organismsDiffer>
    <experiments>5</experiments>
</comment>
<comment type="interaction">
    <interactant intactId="EBI-711018">
        <id>P54274-2</id>
    </interactant>
    <interactant intactId="EBI-718729">
        <id>P55212</id>
        <label>CASP6</label>
    </interactant>
    <organismsDiffer>false</organismsDiffer>
    <experiments>3</experiments>
</comment>
<comment type="interaction">
    <interactant intactId="EBI-711018">
        <id>P54274-2</id>
    </interactant>
    <interactant intactId="EBI-10976677">
        <id>G5E9A7</id>
        <label>DMWD</label>
    </interactant>
    <organismsDiffer>false</organismsDiffer>
    <experiments>3</experiments>
</comment>
<comment type="interaction">
    <interactant intactId="EBI-711018">
        <id>P54274-2</id>
    </interactant>
    <interactant intactId="EBI-9379658">
        <id>Q86X45</id>
        <label>DNAAF11</label>
    </interactant>
    <organismsDiffer>false</organismsDiffer>
    <experiments>3</experiments>
</comment>
<comment type="interaction">
    <interactant intactId="EBI-711018">
        <id>P54274-2</id>
    </interactant>
    <interactant intactId="EBI-960421">
        <id>Q9UKT5-1</id>
        <label>FBXO4</label>
    </interactant>
    <organismsDiffer>false</organismsDiffer>
    <experiments>3</experiments>
</comment>
<comment type="interaction">
    <interactant intactId="EBI-711018">
        <id>P54274-2</id>
    </interactant>
    <interactant intactId="EBI-348399">
        <id>P22607</id>
        <label>FGFR3</label>
    </interactant>
    <organismsDiffer>false</organismsDiffer>
    <experiments>3</experiments>
</comment>
<comment type="interaction">
    <interactant intactId="EBI-711018">
        <id>P54274-2</id>
    </interactant>
    <interactant intactId="EBI-1955541">
        <id>Q53GS7</id>
        <label>GLE1</label>
    </interactant>
    <organismsDiffer>false</organismsDiffer>
    <experiments>3</experiments>
</comment>
<comment type="interaction">
    <interactant intactId="EBI-711018">
        <id>P54274-2</id>
    </interactant>
    <interactant intactId="EBI-8285963">
        <id>Q14957</id>
        <label>GRIN2C</label>
    </interactant>
    <organismsDiffer>false</organismsDiffer>
    <experiments>3</experiments>
</comment>
<comment type="interaction">
    <interactant intactId="EBI-711018">
        <id>P54274-2</id>
    </interactant>
    <interactant intactId="EBI-351506">
        <id>P06396</id>
        <label>GSN</label>
    </interactant>
    <organismsDiffer>false</organismsDiffer>
    <experiments>3</experiments>
</comment>
<comment type="interaction">
    <interactant intactId="EBI-711018">
        <id>P54274-2</id>
    </interactant>
    <interactant intactId="EBI-473886">
        <id>O00291</id>
        <label>HIP1</label>
    </interactant>
    <organismsDiffer>false</organismsDiffer>
    <experiments>3</experiments>
</comment>
<comment type="interaction">
    <interactant intactId="EBI-711018">
        <id>P54274-2</id>
    </interactant>
    <interactant intactId="EBI-712096">
        <id>P30519</id>
        <label>HMOX2</label>
    </interactant>
    <organismsDiffer>false</organismsDiffer>
    <experiments>3</experiments>
</comment>
<comment type="interaction">
    <interactant intactId="EBI-711018">
        <id>P54274-2</id>
    </interactant>
    <interactant intactId="EBI-350145">
        <id>P01112</id>
        <label>HRAS</label>
    </interactant>
    <organismsDiffer>false</organismsDiffer>
    <experiments>3</experiments>
</comment>
<comment type="interaction">
    <interactant intactId="EBI-711018">
        <id>P54274-2</id>
    </interactant>
    <interactant intactId="EBI-11954971">
        <id>Q96MP8-2</id>
        <label>KCTD7</label>
    </interactant>
    <organismsDiffer>false</organismsDiffer>
    <experiments>7</experiments>
</comment>
<comment type="interaction">
    <interactant intactId="EBI-711018">
        <id>P54274-2</id>
    </interactant>
    <interactant intactId="EBI-21591415">
        <id>P13473-2</id>
        <label>LAMP2</label>
    </interactant>
    <organismsDiffer>false</organismsDiffer>
    <experiments>3</experiments>
</comment>
<comment type="interaction">
    <interactant intactId="EBI-711018">
        <id>P54274-2</id>
    </interactant>
    <interactant intactId="EBI-351935">
        <id>P02545</id>
        <label>LMNA</label>
    </interactant>
    <organismsDiffer>false</organismsDiffer>
    <experiments>3</experiments>
</comment>
<comment type="interaction">
    <interactant intactId="EBI-711018">
        <id>P54274-2</id>
    </interactant>
    <interactant intactId="EBI-2555085">
        <id>Q8IVT2</id>
        <label>MISP</label>
    </interactant>
    <organismsDiffer>false</organismsDiffer>
    <experiments>5</experiments>
</comment>
<comment type="interaction">
    <interactant intactId="EBI-711018">
        <id>P54274-2</id>
    </interactant>
    <interactant intactId="EBI-1014472">
        <id>P35240</id>
        <label>NF2</label>
    </interactant>
    <organismsDiffer>false</organismsDiffer>
    <experiments>3</experiments>
</comment>
<comment type="interaction">
    <interactant intactId="EBI-711018">
        <id>P54274-2</id>
    </interactant>
    <interactant intactId="EBI-748974">
        <id>Q96CV9</id>
        <label>OPTN</label>
    </interactant>
    <organismsDiffer>false</organismsDiffer>
    <experiments>3</experiments>
</comment>
<comment type="interaction">
    <interactant intactId="EBI-711018">
        <id>P54274-2</id>
    </interactant>
    <interactant intactId="EBI-10971436">
        <id>Q15004</id>
        <label>PCLAF</label>
    </interactant>
    <organismsDiffer>false</organismsDiffer>
    <experiments>3</experiments>
</comment>
<comment type="interaction">
    <interactant intactId="EBI-711018">
        <id>P54274-2</id>
    </interactant>
    <interactant intactId="EBI-286642">
        <id>P62826</id>
        <label>RAN</label>
    </interactant>
    <organismsDiffer>false</organismsDiffer>
    <experiments>3</experiments>
</comment>
<comment type="interaction">
    <interactant intactId="EBI-711018">
        <id>P54274-2</id>
    </interactant>
    <interactant intactId="EBI-2623095">
        <id>Q9Y371</id>
        <label>SH3GLB1</label>
    </interactant>
    <organismsDiffer>false</organismsDiffer>
    <experiments>3</experiments>
</comment>
<comment type="interaction">
    <interactant intactId="EBI-711018">
        <id>P54274-2</id>
    </interactant>
    <interactant intactId="EBI-5235340">
        <id>Q7Z699</id>
        <label>SPRED1</label>
    </interactant>
    <organismsDiffer>false</organismsDiffer>
    <experiments>3</experiments>
</comment>
<comment type="interaction">
    <interactant intactId="EBI-711018">
        <id>P54274-2</id>
    </interactant>
    <interactant intactId="EBI-1054052">
        <id>P31948</id>
        <label>STIP1</label>
    </interactant>
    <organismsDiffer>false</organismsDiffer>
    <experiments>3</experiments>
</comment>
<comment type="interaction">
    <interactant intactId="EBI-711018">
        <id>P54274-2</id>
    </interactant>
    <interactant intactId="EBI-741480">
        <id>Q9UMX0</id>
        <label>UBQLN1</label>
    </interactant>
    <organismsDiffer>false</organismsDiffer>
    <experiments>3</experiments>
</comment>
<comment type="subcellular location">
    <subcellularLocation>
        <location evidence="12">Nucleus</location>
    </subcellularLocation>
    <subcellularLocation>
        <location evidence="7">Cytoplasm</location>
        <location evidence="7">Cytoskeleton</location>
        <location evidence="7">Spindle</location>
    </subcellularLocation>
    <subcellularLocation>
        <location evidence="12">Chromosome</location>
        <location evidence="12">Telomere</location>
    </subcellularLocation>
    <text evidence="7 12">Colocalizes with telomeric DNA in interphase and prophase cells. Telomeric localization decreases in metaphase, anaphase and telophase. Associates with the mitotic spindle (PubMed:11943150). Colocalizes with TRIOBP isoform 1 at the telomeres in interphase (PubMed:24692559).</text>
</comment>
<comment type="alternative products">
    <event type="alternative splicing"/>
    <isoform>
        <id>P54274-1</id>
        <name>1</name>
        <name>TRF1</name>
        <sequence type="displayed"/>
    </isoform>
    <isoform>
        <id>P54274-2</id>
        <name>2</name>
        <name>Pin2</name>
        <sequence type="described" ref="VSP_003303"/>
    </isoform>
</comment>
<comment type="tissue specificity">
    <text>Highly expressed and ubiquitous. Isoform Pin2 predominates.</text>
</comment>
<comment type="induction">
    <text>Expression is tightly regulated during the cell cycle; levels are low in G1 and S phase and increase during G2 phase and mitosis.</text>
</comment>
<comment type="domain">
    <text evidence="9">The acidic N-terminal domain binds to the ankyrin repeats of TNKS1 and TNKS2. The C-terminal domain binds microtubules.</text>
</comment>
<comment type="domain">
    <text evidence="9">The TRFH dimerization region mediates the interaction with TINF2.</text>
</comment>
<comment type="domain">
    <text evidence="9">The HTH domain is an independent structural unit and mediates binding to telomeric DNA.</text>
</comment>
<comment type="PTM">
    <text evidence="5">Phosphorylated preferentially on Ser-219 in an ATM-dependent manner in response to ionizing DNA damage.</text>
</comment>
<comment type="PTM">
    <text>ADP-ribosylation by TNKS1 or TNKS2 diminishes its ability to bind to telomeric DNA.</text>
</comment>
<comment type="PTM">
    <text evidence="10 11">Ubiquitinated by RLIM/RNF12, leading to its degradation by the proteasome. Ubiquitinated by a SCF (SKP1-CUL1-F-box protein) ubiquitin-protein ligase complex, leading to its degradation by the proteasome.</text>
</comment>
<accession>P54274</accession>
<accession>A7XP29</accession>
<accession>Q15553</accession>
<accession>Q8NHT6</accession>
<accession>Q93029</accession>
<reference key="1">
    <citation type="journal article" date="1995" name="Science">
        <title>A human telomeric protein.</title>
        <authorList>
            <person name="Chong L."/>
            <person name="van Steensel B."/>
            <person name="Broccoli D."/>
            <person name="Erdjument-Bromage H."/>
            <person name="Hanish J."/>
            <person name="Tempst P."/>
            <person name="de Lange T."/>
        </authorList>
    </citation>
    <scope>NUCLEOTIDE SEQUENCE [MRNA] (ISOFORM 1)</scope>
    <scope>PARTIAL PROTEIN SEQUENCE</scope>
    <source>
        <tissue>Cervix carcinoma</tissue>
    </source>
</reference>
<reference key="2">
    <citation type="submission" date="1997-05" db="EMBL/GenBank/DDBJ databases">
        <authorList>
            <person name="de Lange T."/>
        </authorList>
    </citation>
    <scope>SEQUENCE REVISION TO 14</scope>
</reference>
<reference key="3">
    <citation type="journal article" date="1997" name="Nat. Genet.">
        <title>Human telomeres contain two distinct Myb-related proteins, TRF1 and TRF2.</title>
        <authorList>
            <person name="Broccoli D."/>
            <person name="Smogorzewska A."/>
            <person name="Chong L."/>
            <person name="de Lange T."/>
        </authorList>
    </citation>
    <scope>NUCLEOTIDE SEQUENCE [MRNA] (ISOFORM 2)</scope>
    <scope>NUCLEOTIDE SEQUENCE [GENOMIC DNA] OF 1-138 (ISOFORMS 1 AND 2)</scope>
</reference>
<reference key="4">
    <citation type="journal article" date="1997" name="Proc. Natl. Acad. Sci. U.S.A.">
        <title>Characterization and cell cycle regulation of the related human telomeric proteins Pin2 and TRF1 suggest a role in mitosis.</title>
        <authorList>
            <person name="Shen M."/>
            <person name="Haggblom C."/>
            <person name="Vogt M."/>
            <person name="Hunter T."/>
            <person name="Lu K.P."/>
        </authorList>
    </citation>
    <scope>NUCLEOTIDE SEQUENCE [MRNA] (ISOFORM 2)</scope>
    <source>
        <tissue>Cervix carcinoma</tissue>
    </source>
</reference>
<reference key="5">
    <citation type="submission" date="2007-08" db="EMBL/GenBank/DDBJ databases">
        <authorList>
            <consortium name="NIEHS SNPs program"/>
        </authorList>
    </citation>
    <scope>NUCLEOTIDE SEQUENCE [GENOMIC DNA]</scope>
</reference>
<reference key="6">
    <citation type="journal article" date="2006" name="Nature">
        <title>DNA sequence and analysis of human chromosome 8.</title>
        <authorList>
            <person name="Nusbaum C."/>
            <person name="Mikkelsen T.S."/>
            <person name="Zody M.C."/>
            <person name="Asakawa S."/>
            <person name="Taudien S."/>
            <person name="Garber M."/>
            <person name="Kodira C.D."/>
            <person name="Schueler M.G."/>
            <person name="Shimizu A."/>
            <person name="Whittaker C.A."/>
            <person name="Chang J.L."/>
            <person name="Cuomo C.A."/>
            <person name="Dewar K."/>
            <person name="FitzGerald M.G."/>
            <person name="Yang X."/>
            <person name="Allen N.R."/>
            <person name="Anderson S."/>
            <person name="Asakawa T."/>
            <person name="Blechschmidt K."/>
            <person name="Bloom T."/>
            <person name="Borowsky M.L."/>
            <person name="Butler J."/>
            <person name="Cook A."/>
            <person name="Corum B."/>
            <person name="DeArellano K."/>
            <person name="DeCaprio D."/>
            <person name="Dooley K.T."/>
            <person name="Dorris L. III"/>
            <person name="Engels R."/>
            <person name="Gloeckner G."/>
            <person name="Hafez N."/>
            <person name="Hagopian D.S."/>
            <person name="Hall J.L."/>
            <person name="Ishikawa S.K."/>
            <person name="Jaffe D.B."/>
            <person name="Kamat A."/>
            <person name="Kudoh J."/>
            <person name="Lehmann R."/>
            <person name="Lokitsang T."/>
            <person name="Macdonald P."/>
            <person name="Major J.E."/>
            <person name="Matthews C.D."/>
            <person name="Mauceli E."/>
            <person name="Menzel U."/>
            <person name="Mihalev A.H."/>
            <person name="Minoshima S."/>
            <person name="Murayama Y."/>
            <person name="Naylor J.W."/>
            <person name="Nicol R."/>
            <person name="Nguyen C."/>
            <person name="O'Leary S.B."/>
            <person name="O'Neill K."/>
            <person name="Parker S.C.J."/>
            <person name="Polley A."/>
            <person name="Raymond C.K."/>
            <person name="Reichwald K."/>
            <person name="Rodriguez J."/>
            <person name="Sasaki T."/>
            <person name="Schilhabel M."/>
            <person name="Siddiqui R."/>
            <person name="Smith C.L."/>
            <person name="Sneddon T.P."/>
            <person name="Talamas J.A."/>
            <person name="Tenzin P."/>
            <person name="Topham K."/>
            <person name="Venkataraman V."/>
            <person name="Wen G."/>
            <person name="Yamazaki S."/>
            <person name="Young S.K."/>
            <person name="Zeng Q."/>
            <person name="Zimmer A.R."/>
            <person name="Rosenthal A."/>
            <person name="Birren B.W."/>
            <person name="Platzer M."/>
            <person name="Shimizu N."/>
            <person name="Lander E.S."/>
        </authorList>
    </citation>
    <scope>NUCLEOTIDE SEQUENCE [LARGE SCALE GENOMIC DNA]</scope>
</reference>
<reference key="7">
    <citation type="journal article" date="2004" name="Genome Res.">
        <title>The status, quality, and expansion of the NIH full-length cDNA project: the Mammalian Gene Collection (MGC).</title>
        <authorList>
            <consortium name="The MGC Project Team"/>
        </authorList>
    </citation>
    <scope>NUCLEOTIDE SEQUENCE [LARGE SCALE MRNA] (ISOFORM 2)</scope>
    <source>
        <tissue>Liver</tissue>
    </source>
</reference>
<reference key="8">
    <citation type="journal article" date="1996" name="Nucleic Acids Res.">
        <title>The telobox, a Myb-related telomeric DNA binding motif found in proteins from yeast, plants and human.</title>
        <authorList>
            <person name="Bilaud T."/>
            <person name="Koering C.E."/>
            <person name="Binet-Brasselet E."/>
            <person name="Ancelin K."/>
            <person name="Pollice A."/>
            <person name="Gasser S.M."/>
            <person name="Gilson E."/>
        </authorList>
    </citation>
    <scope>NUCLEOTIDE SEQUENCE [MRNA] OF 329-439 (ISOFORMS 1/2)</scope>
    <source>
        <tissue>Cervix carcinoma</tissue>
    </source>
</reference>
<reference key="9">
    <citation type="journal article" date="2001" name="J. Biol. Chem.">
        <title>Telomeric protein Pin2/TRF1 as an important ATM target in response to double strand DNA breaks.</title>
        <authorList>
            <person name="Kishi S."/>
            <person name="Zhou X.Z."/>
            <person name="Ziv Y."/>
            <person name="Khoo C."/>
            <person name="Hill D.E."/>
            <person name="Shiloh Y."/>
            <person name="Lu K.P."/>
        </authorList>
    </citation>
    <scope>MUTAGENESIS OF SER-219</scope>
    <scope>PHOSPHORYLATION AT SER-219</scope>
    <scope>INTERACTION WITH ATM</scope>
</reference>
<reference key="10">
    <citation type="journal article" date="2002" name="FEBS Lett.">
        <title>Involvement of the telomeric protein Pin2/TRF1 in the regulation of the mitotic spindle.</title>
        <authorList>
            <person name="Nakamura M."/>
            <person name="Zhen Zhou X."/>
            <person name="Kishi S."/>
            <person name="Ping Lu K."/>
        </authorList>
    </citation>
    <scope>INTERACTION WITH MAPRE1 AND WITH THE MITOTIC SPINDLE</scope>
    <scope>SUBCELLULAR LOCATION</scope>
</reference>
<reference key="11">
    <citation type="journal article" date="2002" name="Mol. Cell. Biol.">
        <title>Role for the related poly(ADP-Ribose) polymerases tankyrase 1 and 2 at human telomeres.</title>
        <authorList>
            <person name="Cook B.D."/>
            <person name="Dynek J.N."/>
            <person name="Chang W."/>
            <person name="Shostak G."/>
            <person name="Smith S."/>
        </authorList>
    </citation>
    <scope>ADP-RIBOSYLATION</scope>
</reference>
<reference key="12">
    <citation type="journal article" date="2003" name="Nature">
        <title>POT1 as a terminal transducer of TRF1 telomere length control.</title>
        <authorList>
            <person name="Loayza D."/>
            <person name="De Lange T."/>
        </authorList>
    </citation>
    <scope>IDENTIFICATION IN A COMPLEX WITH POT1; TINF2 AND TNKS1</scope>
</reference>
<reference key="13">
    <citation type="journal article" date="2004" name="J. Biol. Chem.">
        <title>TIN2 binds TRF1 and TRF2 simultaneously and stabilizes the TRF2 complex on telomeres.</title>
        <authorList>
            <person name="Ye J.Z.-S."/>
            <person name="Donigian J.R."/>
            <person name="van Overbeek M."/>
            <person name="Loayza D."/>
            <person name="Luo Y."/>
            <person name="Krutchinsky A.N."/>
            <person name="Chait B.T."/>
            <person name="de Lange T."/>
        </authorList>
    </citation>
    <scope>IDENTIFICATION IN THE SHELTERIN COMPLEX</scope>
</reference>
<reference key="14">
    <citation type="journal article" date="2004" name="J. Biol. Chem.">
        <title>Telosome, a mammalian telomere-associated complex formed by multiple telomeric proteins.</title>
        <authorList>
            <person name="Liu D."/>
            <person name="O'Connor M.S."/>
            <person name="Qin J."/>
            <person name="Songyang Z."/>
        </authorList>
    </citation>
    <scope>IDENTIFICATION IN THE SHELTERIN COMPLEX</scope>
</reference>
<reference key="15">
    <citation type="journal article" date="2005" name="Genes Dev.">
        <title>Shelterin: the protein complex that shapes and safeguards human telomeres.</title>
        <authorList>
            <person name="de Lange T."/>
        </authorList>
    </citation>
    <scope>FUNCTION OF THE SHELTERIN COMPLEX</scope>
</reference>
<reference key="16">
    <citation type="journal article" date="2006" name="Cell">
        <title>Global, in vivo, and site-specific phosphorylation dynamics in signaling networks.</title>
        <authorList>
            <person name="Olsen J.V."/>
            <person name="Blagoev B."/>
            <person name="Gnad F."/>
            <person name="Macek B."/>
            <person name="Kumar C."/>
            <person name="Mortensen P."/>
            <person name="Mann M."/>
        </authorList>
    </citation>
    <scope>PHOSPHORYLATION [LARGE SCALE ANALYSIS] AT SER-11</scope>
    <scope>IDENTIFICATION BY MASS SPECTROMETRY [LARGE SCALE ANALYSIS]</scope>
    <source>
        <tissue>Cervix carcinoma</tissue>
    </source>
</reference>
<reference key="17">
    <citation type="journal article" date="2008" name="Proc. Natl. Acad. Sci. U.S.A.">
        <title>A quantitative atlas of mitotic phosphorylation.</title>
        <authorList>
            <person name="Dephoure N."/>
            <person name="Zhou C."/>
            <person name="Villen J."/>
            <person name="Beausoleil S.A."/>
            <person name="Bakalarski C.E."/>
            <person name="Elledge S.J."/>
            <person name="Gygi S.P."/>
        </authorList>
    </citation>
    <scope>IDENTIFICATION BY MASS SPECTROMETRY [LARGE SCALE ANALYSIS]</scope>
    <source>
        <tissue>Cervix carcinoma</tissue>
    </source>
</reference>
<reference key="18">
    <citation type="journal article" date="2009" name="Anal. Chem.">
        <title>Lys-N and trypsin cover complementary parts of the phosphoproteome in a refined SCX-based approach.</title>
        <authorList>
            <person name="Gauci S."/>
            <person name="Helbig A.O."/>
            <person name="Slijper M."/>
            <person name="Krijgsveld J."/>
            <person name="Heck A.J."/>
            <person name="Mohammed S."/>
        </authorList>
    </citation>
    <scope>ACETYLATION [LARGE SCALE ANALYSIS] AT ALA-2</scope>
    <scope>CLEAVAGE OF INITIATOR METHIONINE [LARGE SCALE ANALYSIS]</scope>
    <scope>IDENTIFICATION BY MASS SPECTROMETRY [LARGE SCALE ANALYSIS]</scope>
</reference>
<reference key="19">
    <citation type="journal article" date="2009" name="J. Biol. Chem.">
        <title>Ubiquitin ligase RLIM modulates telomere length homeostasis through a proteolysis of TRF1.</title>
        <authorList>
            <person name="Her Y.R."/>
            <person name="Chung I.K."/>
        </authorList>
    </citation>
    <scope>INTERACTION WITH RLIM</scope>
    <scope>SUBCELLULAR LOCATION</scope>
    <scope>UBIQUITINATION</scope>
</reference>
<reference key="20">
    <citation type="journal article" date="2009" name="J. Cell Biol.">
        <title>GNL3L stabilizes the TRF1 complex and promotes mitotic transition.</title>
        <authorList>
            <person name="Zhu Q."/>
            <person name="Meng L."/>
            <person name="Hsu J.K."/>
            <person name="Lin T."/>
            <person name="Teishima J."/>
            <person name="Tsai R.Y."/>
        </authorList>
    </citation>
    <scope>SUBCELLULAR LOCATION</scope>
</reference>
<reference key="21">
    <citation type="journal article" date="2010" name="Sci. Signal.">
        <title>Quantitative phosphoproteomics reveals widespread full phosphorylation site occupancy during mitosis.</title>
        <authorList>
            <person name="Olsen J.V."/>
            <person name="Vermeulen M."/>
            <person name="Santamaria A."/>
            <person name="Kumar C."/>
            <person name="Miller M.L."/>
            <person name="Jensen L.J."/>
            <person name="Gnad F."/>
            <person name="Cox J."/>
            <person name="Jensen T.S."/>
            <person name="Nigg E.A."/>
            <person name="Brunak S."/>
            <person name="Mann M."/>
        </authorList>
    </citation>
    <scope>ACETYLATION [LARGE SCALE ANALYSIS] AT ALA-2</scope>
    <scope>PHOSPHORYLATION [LARGE SCALE ANALYSIS] AT SER-11</scope>
    <scope>CLEAVAGE OF INITIATOR METHIONINE [LARGE SCALE ANALYSIS]</scope>
    <scope>IDENTIFICATION BY MASS SPECTROMETRY [LARGE SCALE ANALYSIS]</scope>
    <source>
        <tissue>Cervix carcinoma</tissue>
    </source>
</reference>
<reference key="22">
    <citation type="journal article" date="2013" name="J. Proteome Res.">
        <title>Toward a comprehensive characterization of a human cancer cell phosphoproteome.</title>
        <authorList>
            <person name="Zhou H."/>
            <person name="Di Palma S."/>
            <person name="Preisinger C."/>
            <person name="Peng M."/>
            <person name="Polat A.N."/>
            <person name="Heck A.J."/>
            <person name="Mohammed S."/>
        </authorList>
    </citation>
    <scope>PHOSPHORYLATION [LARGE SCALE ANALYSIS] AT SER-11</scope>
    <scope>IDENTIFICATION BY MASS SPECTROMETRY [LARGE SCALE ANALYSIS]</scope>
    <source>
        <tissue>Cervix carcinoma</tissue>
        <tissue>Erythroleukemia</tissue>
    </source>
</reference>
<reference key="23">
    <citation type="journal article" date="2013" name="Proc. Natl. Acad. Sci. U.S.A.">
        <title>Inherited mutations in the helicase RTEL1 cause telomere dysfunction and Hoyeraal-Hreidarsson syndrome.</title>
        <authorList>
            <person name="Deng Z."/>
            <person name="Glousker G."/>
            <person name="Molczan A."/>
            <person name="Fox A.J."/>
            <person name="Lamm N."/>
            <person name="Dheekollu J."/>
            <person name="Weizman O.E."/>
            <person name="Schertzer M."/>
            <person name="Wang Z."/>
            <person name="Vladimirova O."/>
            <person name="Schug J."/>
            <person name="Aker M."/>
            <person name="Londono-Vallejo A."/>
            <person name="Kaestner K.H."/>
            <person name="Lieberman P.M."/>
            <person name="Tzfati Y."/>
        </authorList>
    </citation>
    <scope>INTERACTION WITH RTEL1</scope>
</reference>
<reference key="24">
    <citation type="journal article" date="2014" name="J. Biol. Chem.">
        <title>The 68-kDa telomeric repeat binding factor 1 (TRF1)-associated protein (TAP68) interacts with and recruits TRF1 to the spindle pole during mitosis.</title>
        <authorList>
            <person name="Lan J."/>
            <person name="Zhu Y."/>
            <person name="Xu L."/>
            <person name="Yu H."/>
            <person name="Yu J."/>
            <person name="Liu X."/>
            <person name="Fu C."/>
            <person name="Wang X."/>
            <person name="Ke Y."/>
            <person name="Huang H."/>
            <person name="Dou Z."/>
        </authorList>
    </citation>
    <scope>SUBCELLULAR LOCATION</scope>
    <scope>INTERACTION WITH TRIOBP</scope>
</reference>
<reference key="25">
    <citation type="journal article" date="2017" name="Nat. Struct. Mol. Biol.">
        <title>Site-specific mapping of the human SUMO proteome reveals co-modification with phosphorylation.</title>
        <authorList>
            <person name="Hendriks I.A."/>
            <person name="Lyon D."/>
            <person name="Young C."/>
            <person name="Jensen L.J."/>
            <person name="Vertegaal A.C."/>
            <person name="Nielsen M.L."/>
        </authorList>
    </citation>
    <scope>SUMOYLATION [LARGE SCALE ANALYSIS] AT LYS-213; LYS-325 AND LYS-366</scope>
    <scope>IDENTIFICATION BY MASS SPECTROMETRY [LARGE SCALE ANALYSIS]</scope>
</reference>
<reference key="26">
    <citation type="journal article" date="1998" name="Structure">
        <title>Solution structure of the DNA-binding domain of human telomeric protein, hTRF1.</title>
        <authorList>
            <person name="Nishikawa T."/>
            <person name="Nagadoi A."/>
            <person name="Yoshimura S."/>
            <person name="Aimoto S."/>
            <person name="Nishimura Y."/>
        </authorList>
    </citation>
    <scope>STRUCTURE BY NMR OF 378-430</scope>
</reference>
<reference key="27">
    <citation type="journal article" date="2001" name="Structure">
        <title>Solution structure of a telomeric DNA complex of human TRF1.</title>
        <authorList>
            <person name="Nishikawa T."/>
            <person name="Okamura H."/>
            <person name="Nagadoi A."/>
            <person name="Koenig P."/>
            <person name="Rhodes D."/>
            <person name="Nishimura Y."/>
        </authorList>
    </citation>
    <scope>STRUCTURE BY NMR OF 371-439</scope>
</reference>
<reference key="28">
    <citation type="journal article" date="2001" name="Mol. Cell">
        <title>Structure of the TRFH dimerization domain of the human telomeric proteins TRF1 and TRF2.</title>
        <authorList>
            <person name="Fairall L."/>
            <person name="Chapman L."/>
            <person name="Moss H."/>
            <person name="de Lange T."/>
            <person name="Rhodes D."/>
        </authorList>
    </citation>
    <scope>X-RAY CRYSTALLOGRAPHY (2.9 ANGSTROMS) OF 48-268</scope>
    <scope>MUTAGENESIS OF ALA-74; ALA-75; TRP-77; PHE-81 AND PHE-90</scope>
</reference>
<reference key="29">
    <citation type="journal article" date="2005" name="EMBO Rep.">
        <title>How the human telomeric proteins TRF1 and TRF2 recognize telomeric DNA: a view from high-resolution crystal structures.</title>
        <authorList>
            <person name="Court R."/>
            <person name="Chapman L."/>
            <person name="Fairall L."/>
            <person name="Rhodes D."/>
        </authorList>
    </citation>
    <scope>X-RAY CRYSTALLOGRAPHY (2.0 ANGSTROMS) OF 379-431 IN COMPLEX WITH TELOMERIC DNA</scope>
    <scope>SUBUNIT</scope>
</reference>
<reference key="30">
    <citation type="journal article" date="2008" name="Science">
        <title>A shared docking motif in TRF1 and TRF2 used for differential recruitment of telomeric proteins.</title>
        <authorList>
            <person name="Chen Y."/>
            <person name="Yang Y."/>
            <person name="van Overbeek M."/>
            <person name="Donigian J.R."/>
            <person name="Baciu P."/>
            <person name="de Lange T."/>
            <person name="Lei M."/>
        </authorList>
    </citation>
    <scope>X-RAY CRYSTALLOGRAPHY (2.0 ANGSTROMS) OF 58-268 IN COMPLEX WITH TINF2</scope>
    <scope>INTERACTION WITH TINF2 AND PINX1</scope>
    <scope>DOMAIN TRFH DIMERIZATION</scope>
    <scope>SUBUNIT</scope>
</reference>
<reference key="31">
    <citation type="journal article" date="2010" name="Dev. Cell">
        <title>Structural basis of selective ubiquitination of TRF1 by SCFFbx4.</title>
        <authorList>
            <person name="Zeng Z."/>
            <person name="Wang W."/>
            <person name="Yang Y."/>
            <person name="Chen Y."/>
            <person name="Yang X."/>
            <person name="Diehl J.A."/>
            <person name="Liu X."/>
            <person name="Lei M."/>
        </authorList>
    </citation>
    <scope>X-RAY CRYSTALLOGRAPHY (2.4 ANGSTROMS) OF 58-268 IN COMPLEX WITH FBXO4</scope>
    <scope>MUTAGENESIS OF LEU-115 AND LEU-120</scope>
    <scope>INTERACTION WITH TINF2</scope>
    <scope>SUBUNIT</scope>
    <scope>UBIQUITINATION</scope>
</reference>
<feature type="initiator methionine" description="Removed" evidence="18 19">
    <location>
        <position position="1"/>
    </location>
</feature>
<feature type="chain" id="PRO_0000197129" description="Telomeric repeat-binding factor 1">
    <location>
        <begin position="2"/>
        <end position="439"/>
    </location>
</feature>
<feature type="domain" description="HTH myb-type" evidence="3">
    <location>
        <begin position="375"/>
        <end position="432"/>
    </location>
</feature>
<feature type="DNA-binding region" description="H-T-H motif" evidence="3">
    <location>
        <begin position="403"/>
        <end position="428"/>
    </location>
</feature>
<feature type="region of interest" description="Disordered" evidence="4">
    <location>
        <begin position="1"/>
        <end position="36"/>
    </location>
</feature>
<feature type="region of interest" description="TRFH mediates dimerization" evidence="9">
    <location>
        <begin position="58"/>
        <end position="268"/>
    </location>
</feature>
<feature type="region of interest" description="Interaction with RLIM" evidence="10">
    <location>
        <begin position="265"/>
        <end position="378"/>
    </location>
</feature>
<feature type="region of interest" description="Disordered" evidence="4">
    <location>
        <begin position="266"/>
        <end position="311"/>
    </location>
</feature>
<feature type="region of interest" description="Disordered" evidence="4">
    <location>
        <begin position="326"/>
        <end position="375"/>
    </location>
</feature>
<feature type="short sequence motif" description="Nuclear localization signal" evidence="2">
    <location>
        <begin position="337"/>
        <end position="356"/>
    </location>
</feature>
<feature type="compositionally biased region" description="Acidic residues" evidence="4">
    <location>
        <begin position="23"/>
        <end position="36"/>
    </location>
</feature>
<feature type="compositionally biased region" description="Polar residues" evidence="4">
    <location>
        <begin position="299"/>
        <end position="311"/>
    </location>
</feature>
<feature type="modified residue" description="N-acetylalanine" evidence="18 19">
    <location>
        <position position="2"/>
    </location>
</feature>
<feature type="modified residue" description="Phosphoserine" evidence="17 19 20">
    <location>
        <position position="11"/>
    </location>
</feature>
<feature type="modified residue" description="Phosphoserine; by ATM" evidence="5">
    <location>
        <position position="219"/>
    </location>
</feature>
<feature type="cross-link" description="Glycyl lysine isopeptide (Lys-Gly) (interchain with G-Cter in SUMO2)" evidence="21">
    <location>
        <position position="213"/>
    </location>
</feature>
<feature type="cross-link" description="Glycyl lysine isopeptide (Lys-Gly) (interchain with G-Cter in SUMO2)" evidence="21">
    <location>
        <position position="325"/>
    </location>
</feature>
<feature type="cross-link" description="Glycyl lysine isopeptide (Lys-Gly) (interchain with G-Cter in SUMO2)" evidence="21">
    <location>
        <position position="366"/>
    </location>
</feature>
<feature type="splice variant" id="VSP_003303" description="In isoform 2." evidence="13 14 15">
    <location>
        <begin position="296"/>
        <end position="315"/>
    </location>
</feature>
<feature type="mutagenesis site" description="Abolishes dimerization and telomere binding; when associated with P-75." evidence="6">
    <original>A</original>
    <variation>D</variation>
    <location>
        <position position="74"/>
    </location>
</feature>
<feature type="mutagenesis site" description="Abolishes dimerization and telomere binding; when associated with D-74." evidence="6">
    <original>A</original>
    <variation>P</variation>
    <location>
        <position position="75"/>
    </location>
</feature>
<feature type="mutagenesis site" description="Abolishes telomere binding." evidence="6">
    <original>W</original>
    <variation>P</variation>
    <location>
        <position position="77"/>
    </location>
</feature>
<feature type="mutagenesis site" description="Abolishes telomere binding." evidence="6">
    <original>F</original>
    <variation>P</variation>
    <location>
        <position position="81"/>
    </location>
</feature>
<feature type="mutagenesis site" description="Diminishes telomere binding." evidence="6">
    <original>F</original>
    <variation>P</variation>
    <location>
        <position position="90"/>
    </location>
</feature>
<feature type="mutagenesis site" description="Loss of interaction with FBXO4." evidence="11">
    <original>L</original>
    <variation>R</variation>
    <location>
        <position position="115"/>
    </location>
</feature>
<feature type="mutagenesis site" description="Loss of interaction with FBXO4." evidence="11">
    <original>L</original>
    <variation>R</variation>
    <location>
        <position position="120"/>
    </location>
</feature>
<feature type="mutagenesis site" description="Loss of phosphorylation; induction of mitotic entry and apoptosis and increased radiation hypersensitivity of ataxia-telangiectasia cells." evidence="5">
    <original>S</original>
    <variation>A</variation>
    <location>
        <position position="219"/>
    </location>
</feature>
<feature type="mutagenesis site" description="Fails to induce apoptosis and decreases radiation hypersensitivity of ataxia-telangiectasia cells (phospho-mimicking mutants)." evidence="5">
    <original>S</original>
    <variation>D</variation>
    <variation>E</variation>
    <location>
        <position position="219"/>
    </location>
</feature>
<feature type="sequence conflict" description="In Ref. 1; AAB54036, 3; AAB17975/AAB81137 and 4; AAB53363." evidence="16" ref="1 3 4">
    <original>G</original>
    <variation>R</variation>
    <location>
        <position position="14"/>
    </location>
</feature>
<feature type="sequence conflict" description="In Ref. 8; CAA63768." evidence="16" ref="8">
    <original>K</original>
    <variation>E</variation>
    <location>
        <position position="338"/>
    </location>
</feature>
<feature type="helix" evidence="25">
    <location>
        <begin position="63"/>
        <end position="92"/>
    </location>
</feature>
<feature type="helix" evidence="25">
    <location>
        <begin position="95"/>
        <end position="110"/>
    </location>
</feature>
<feature type="strand" evidence="26">
    <location>
        <begin position="113"/>
        <end position="115"/>
    </location>
</feature>
<feature type="helix" evidence="25">
    <location>
        <begin position="117"/>
        <end position="133"/>
    </location>
</feature>
<feature type="turn" evidence="25">
    <location>
        <begin position="134"/>
        <end position="136"/>
    </location>
</feature>
<feature type="strand" evidence="25">
    <location>
        <begin position="143"/>
        <end position="145"/>
    </location>
</feature>
<feature type="helix" evidence="25">
    <location>
        <begin position="150"/>
        <end position="158"/>
    </location>
</feature>
<feature type="helix" evidence="25">
    <location>
        <begin position="167"/>
        <end position="186"/>
    </location>
</feature>
<feature type="helix" evidence="25">
    <location>
        <begin position="190"/>
        <end position="200"/>
    </location>
</feature>
<feature type="strand" evidence="26">
    <location>
        <begin position="203"/>
        <end position="205"/>
    </location>
</feature>
<feature type="helix" evidence="25">
    <location>
        <begin position="211"/>
        <end position="219"/>
    </location>
</feature>
<feature type="helix" evidence="25">
    <location>
        <begin position="226"/>
        <end position="230"/>
    </location>
</feature>
<feature type="helix" evidence="25">
    <location>
        <begin position="233"/>
        <end position="251"/>
    </location>
</feature>
<feature type="strand" evidence="22">
    <location>
        <begin position="252"/>
        <end position="254"/>
    </location>
</feature>
<feature type="helix" evidence="25">
    <location>
        <begin position="255"/>
        <end position="265"/>
    </location>
</feature>
<feature type="strand" evidence="23">
    <location>
        <begin position="377"/>
        <end position="379"/>
    </location>
</feature>
<feature type="helix" evidence="24">
    <location>
        <begin position="385"/>
        <end position="398"/>
    </location>
</feature>
<feature type="helix" evidence="24">
    <location>
        <begin position="403"/>
        <end position="409"/>
    </location>
</feature>
<feature type="strand" evidence="27">
    <location>
        <begin position="410"/>
        <end position="412"/>
    </location>
</feature>
<feature type="helix" evidence="24">
    <location>
        <begin position="417"/>
        <end position="428"/>
    </location>
</feature>